<evidence type="ECO:0000250" key="1"/>
<evidence type="ECO:0000255" key="2">
    <source>
        <dbReference type="PROSITE-ProRule" id="PRU00169"/>
    </source>
</evidence>
<evidence type="ECO:0000255" key="3">
    <source>
        <dbReference type="PROSITE-ProRule" id="PRU01091"/>
    </source>
</evidence>
<evidence type="ECO:0000305" key="4"/>
<gene>
    <name type="primary">cpxR</name>
    <name type="ordered locus">Z5457</name>
    <name type="ordered locus">ECs4838</name>
</gene>
<dbReference type="EMBL" id="AE005174">
    <property type="protein sequence ID" value="AAG59106.1"/>
    <property type="molecule type" value="Genomic_DNA"/>
</dbReference>
<dbReference type="EMBL" id="BA000007">
    <property type="protein sequence ID" value="BAB38261.1"/>
    <property type="molecule type" value="Genomic_DNA"/>
</dbReference>
<dbReference type="PIR" id="F86080">
    <property type="entry name" value="F86080"/>
</dbReference>
<dbReference type="PIR" id="F91233">
    <property type="entry name" value="F91233"/>
</dbReference>
<dbReference type="RefSeq" id="NP_312865.1">
    <property type="nucleotide sequence ID" value="NC_002695.1"/>
</dbReference>
<dbReference type="RefSeq" id="WP_001033722.1">
    <property type="nucleotide sequence ID" value="NZ_VOAI01000016.1"/>
</dbReference>
<dbReference type="SMR" id="P0AE89"/>
<dbReference type="STRING" id="155864.Z5457"/>
<dbReference type="GeneID" id="915041"/>
<dbReference type="GeneID" id="93778026"/>
<dbReference type="KEGG" id="ece:Z5457"/>
<dbReference type="KEGG" id="ecs:ECs_4838"/>
<dbReference type="PATRIC" id="fig|386585.9.peg.5059"/>
<dbReference type="eggNOG" id="COG0745">
    <property type="taxonomic scope" value="Bacteria"/>
</dbReference>
<dbReference type="HOGENOM" id="CLU_000445_30_4_6"/>
<dbReference type="OMA" id="QLWGYPP"/>
<dbReference type="Proteomes" id="UP000000558">
    <property type="component" value="Chromosome"/>
</dbReference>
<dbReference type="Proteomes" id="UP000002519">
    <property type="component" value="Chromosome"/>
</dbReference>
<dbReference type="GO" id="GO:0005829">
    <property type="term" value="C:cytosol"/>
    <property type="evidence" value="ECO:0007669"/>
    <property type="project" value="TreeGrafter"/>
</dbReference>
<dbReference type="GO" id="GO:0032993">
    <property type="term" value="C:protein-DNA complex"/>
    <property type="evidence" value="ECO:0007669"/>
    <property type="project" value="TreeGrafter"/>
</dbReference>
<dbReference type="GO" id="GO:0000156">
    <property type="term" value="F:phosphorelay response regulator activity"/>
    <property type="evidence" value="ECO:0007669"/>
    <property type="project" value="TreeGrafter"/>
</dbReference>
<dbReference type="GO" id="GO:0000976">
    <property type="term" value="F:transcription cis-regulatory region binding"/>
    <property type="evidence" value="ECO:0007669"/>
    <property type="project" value="TreeGrafter"/>
</dbReference>
<dbReference type="GO" id="GO:0006355">
    <property type="term" value="P:regulation of DNA-templated transcription"/>
    <property type="evidence" value="ECO:0007669"/>
    <property type="project" value="InterPro"/>
</dbReference>
<dbReference type="CDD" id="cd17623">
    <property type="entry name" value="REC_OmpR_CpxR"/>
    <property type="match status" value="1"/>
</dbReference>
<dbReference type="CDD" id="cd00383">
    <property type="entry name" value="trans_reg_C"/>
    <property type="match status" value="1"/>
</dbReference>
<dbReference type="FunFam" id="1.10.10.10:FF:000077">
    <property type="entry name" value="DNA-binding transcriptional regulator CpxR"/>
    <property type="match status" value="1"/>
</dbReference>
<dbReference type="FunFam" id="3.40.50.2300:FF:000032">
    <property type="entry name" value="DNA-binding transcriptional regulator CpxR"/>
    <property type="match status" value="1"/>
</dbReference>
<dbReference type="Gene3D" id="3.40.50.2300">
    <property type="match status" value="1"/>
</dbReference>
<dbReference type="Gene3D" id="6.10.250.690">
    <property type="match status" value="1"/>
</dbReference>
<dbReference type="Gene3D" id="1.10.10.10">
    <property type="entry name" value="Winged helix-like DNA-binding domain superfamily/Winged helix DNA-binding domain"/>
    <property type="match status" value="1"/>
</dbReference>
<dbReference type="InterPro" id="IPR011006">
    <property type="entry name" value="CheY-like_superfamily"/>
</dbReference>
<dbReference type="InterPro" id="IPR001867">
    <property type="entry name" value="OmpR/PhoB-type_DNA-bd"/>
</dbReference>
<dbReference type="InterPro" id="IPR001789">
    <property type="entry name" value="Sig_transdc_resp-reg_receiver"/>
</dbReference>
<dbReference type="InterPro" id="IPR039420">
    <property type="entry name" value="WalR-like"/>
</dbReference>
<dbReference type="InterPro" id="IPR036388">
    <property type="entry name" value="WH-like_DNA-bd_sf"/>
</dbReference>
<dbReference type="NCBIfam" id="NF008199">
    <property type="entry name" value="PRK10955.1"/>
    <property type="match status" value="1"/>
</dbReference>
<dbReference type="PANTHER" id="PTHR48111">
    <property type="entry name" value="REGULATOR OF RPOS"/>
    <property type="match status" value="1"/>
</dbReference>
<dbReference type="PANTHER" id="PTHR48111:SF39">
    <property type="entry name" value="TRANSCRIPTIONAL REGULATORY PROTEIN CPXR"/>
    <property type="match status" value="1"/>
</dbReference>
<dbReference type="Pfam" id="PF00072">
    <property type="entry name" value="Response_reg"/>
    <property type="match status" value="1"/>
</dbReference>
<dbReference type="Pfam" id="PF00486">
    <property type="entry name" value="Trans_reg_C"/>
    <property type="match status" value="1"/>
</dbReference>
<dbReference type="SMART" id="SM00448">
    <property type="entry name" value="REC"/>
    <property type="match status" value="1"/>
</dbReference>
<dbReference type="SMART" id="SM00862">
    <property type="entry name" value="Trans_reg_C"/>
    <property type="match status" value="1"/>
</dbReference>
<dbReference type="SUPFAM" id="SSF52172">
    <property type="entry name" value="CheY-like"/>
    <property type="match status" value="1"/>
</dbReference>
<dbReference type="PROSITE" id="PS51755">
    <property type="entry name" value="OMPR_PHOB"/>
    <property type="match status" value="1"/>
</dbReference>
<dbReference type="PROSITE" id="PS50110">
    <property type="entry name" value="RESPONSE_REGULATORY"/>
    <property type="match status" value="1"/>
</dbReference>
<accession>P0AE89</accession>
<accession>P16244</accession>
<accession>P76777</accession>
<keyword id="KW-0963">Cytoplasm</keyword>
<keyword id="KW-0238">DNA-binding</keyword>
<keyword id="KW-0597">Phosphoprotein</keyword>
<keyword id="KW-1185">Reference proteome</keyword>
<keyword id="KW-0804">Transcription</keyword>
<keyword id="KW-0805">Transcription regulation</keyword>
<keyword id="KW-0902">Two-component regulatory system</keyword>
<sequence>MNKILLVDDDRELTSLLKELLEMEGFNVIVAHDGEQALDLLDDSIDLLLLDVMMPKKNGIDTLKALRQTHQTPVIMLTARGSELDRVLGLELGADDYLPKPFNDRELVARIRAILRRSHWSEQQQNNDNGSPTLEVDALVLNPGRQEASFDGQTLELTGTEFTLLYLLAQHLGQVVSREHLSQEVLGKRLTPFDRAIDMHISNLRRKLPDRKDGHPWFKTLRGRGYLMVSAS</sequence>
<feature type="chain" id="PRO_0000081079" description="Transcriptional regulatory protein CpxR">
    <location>
        <begin position="1"/>
        <end position="232"/>
    </location>
</feature>
<feature type="domain" description="Response regulatory" evidence="2">
    <location>
        <begin position="3"/>
        <end position="115"/>
    </location>
</feature>
<feature type="DNA-binding region" description="OmpR/PhoB-type" evidence="3">
    <location>
        <begin position="131"/>
        <end position="230"/>
    </location>
</feature>
<feature type="modified residue" description="4-aspartylphosphate" evidence="2">
    <location>
        <position position="51"/>
    </location>
</feature>
<comment type="function">
    <text evidence="1">Member of the two-component regulatory system CpxA/CpxR. This system combats a variety of extracytoplasmic protein-mediated toxicities. It performs this function by increasing the synthesis of the periplasmic protease, DegP as well as that of CpxP protein (By similarity).</text>
</comment>
<comment type="subcellular location">
    <subcellularLocation>
        <location evidence="4">Cytoplasm</location>
    </subcellularLocation>
</comment>
<comment type="PTM">
    <text evidence="4">Phosphorylated by CpxA.</text>
</comment>
<proteinExistence type="inferred from homology"/>
<organism>
    <name type="scientific">Escherichia coli O157:H7</name>
    <dbReference type="NCBI Taxonomy" id="83334"/>
    <lineage>
        <taxon>Bacteria</taxon>
        <taxon>Pseudomonadati</taxon>
        <taxon>Pseudomonadota</taxon>
        <taxon>Gammaproteobacteria</taxon>
        <taxon>Enterobacterales</taxon>
        <taxon>Enterobacteriaceae</taxon>
        <taxon>Escherichia</taxon>
    </lineage>
</organism>
<name>CPXR_ECO57</name>
<reference key="1">
    <citation type="journal article" date="2001" name="Nature">
        <title>Genome sequence of enterohaemorrhagic Escherichia coli O157:H7.</title>
        <authorList>
            <person name="Perna N.T."/>
            <person name="Plunkett G. III"/>
            <person name="Burland V."/>
            <person name="Mau B."/>
            <person name="Glasner J.D."/>
            <person name="Rose D.J."/>
            <person name="Mayhew G.F."/>
            <person name="Evans P.S."/>
            <person name="Gregor J."/>
            <person name="Kirkpatrick H.A."/>
            <person name="Posfai G."/>
            <person name="Hackett J."/>
            <person name="Klink S."/>
            <person name="Boutin A."/>
            <person name="Shao Y."/>
            <person name="Miller L."/>
            <person name="Grotbeck E.J."/>
            <person name="Davis N.W."/>
            <person name="Lim A."/>
            <person name="Dimalanta E.T."/>
            <person name="Potamousis K."/>
            <person name="Apodaca J."/>
            <person name="Anantharaman T.S."/>
            <person name="Lin J."/>
            <person name="Yen G."/>
            <person name="Schwartz D.C."/>
            <person name="Welch R.A."/>
            <person name="Blattner F.R."/>
        </authorList>
    </citation>
    <scope>NUCLEOTIDE SEQUENCE [LARGE SCALE GENOMIC DNA]</scope>
    <source>
        <strain>O157:H7 / EDL933 / ATCC 700927 / EHEC</strain>
    </source>
</reference>
<reference key="2">
    <citation type="journal article" date="2001" name="DNA Res.">
        <title>Complete genome sequence of enterohemorrhagic Escherichia coli O157:H7 and genomic comparison with a laboratory strain K-12.</title>
        <authorList>
            <person name="Hayashi T."/>
            <person name="Makino K."/>
            <person name="Ohnishi M."/>
            <person name="Kurokawa K."/>
            <person name="Ishii K."/>
            <person name="Yokoyama K."/>
            <person name="Han C.-G."/>
            <person name="Ohtsubo E."/>
            <person name="Nakayama K."/>
            <person name="Murata T."/>
            <person name="Tanaka M."/>
            <person name="Tobe T."/>
            <person name="Iida T."/>
            <person name="Takami H."/>
            <person name="Honda T."/>
            <person name="Sasakawa C."/>
            <person name="Ogasawara N."/>
            <person name="Yasunaga T."/>
            <person name="Kuhara S."/>
            <person name="Shiba T."/>
            <person name="Hattori M."/>
            <person name="Shinagawa H."/>
        </authorList>
    </citation>
    <scope>NUCLEOTIDE SEQUENCE [LARGE SCALE GENOMIC DNA]</scope>
    <source>
        <strain>O157:H7 / Sakai / RIMD 0509952 / EHEC</strain>
    </source>
</reference>
<protein>
    <recommendedName>
        <fullName>Transcriptional regulatory protein CpxR</fullName>
    </recommendedName>
</protein>